<organism>
    <name type="scientific">Listeria monocytogenes serovar 1/2a (strain ATCC BAA-679 / EGD-e)</name>
    <dbReference type="NCBI Taxonomy" id="169963"/>
    <lineage>
        <taxon>Bacteria</taxon>
        <taxon>Bacillati</taxon>
        <taxon>Bacillota</taxon>
        <taxon>Bacilli</taxon>
        <taxon>Bacillales</taxon>
        <taxon>Listeriaceae</taxon>
        <taxon>Listeria</taxon>
    </lineage>
</organism>
<comment type="function">
    <text evidence="1">May play a role in DNA repair. It seems to be involved in an RecBC-independent recombinational process of DNA repair. It may act with RecF and RecO.</text>
</comment>
<comment type="similarity">
    <text evidence="1">Belongs to the RecR family.</text>
</comment>
<protein>
    <recommendedName>
        <fullName evidence="1">Recombination protein RecR</fullName>
    </recommendedName>
</protein>
<name>RECR_LISMO</name>
<proteinExistence type="inferred from homology"/>
<sequence length="198" mass="21934">MHYPEPITKLIDSFMKLPGIGPKSAARLAFYVLDMKEDDVLDFAKALVDAKRNLSFCSVCGHITDKDPCYICADTSRDRSVICVVQESKDVIAMEKMRDFHGLYHVLHGTISPMDGIGPEDINIPDLLKRLQDDTIEEVILATNPNVEGEATAMYISRLLKPSGIKVTRIAHGLPVGGDLEYADEVTLSKAMEGRREV</sequence>
<keyword id="KW-0227">DNA damage</keyword>
<keyword id="KW-0233">DNA recombination</keyword>
<keyword id="KW-0234">DNA repair</keyword>
<keyword id="KW-0479">Metal-binding</keyword>
<keyword id="KW-1185">Reference proteome</keyword>
<keyword id="KW-0862">Zinc</keyword>
<keyword id="KW-0863">Zinc-finger</keyword>
<feature type="chain" id="PRO_0000190345" description="Recombination protein RecR">
    <location>
        <begin position="1"/>
        <end position="198"/>
    </location>
</feature>
<feature type="domain" description="Toprim" evidence="1">
    <location>
        <begin position="80"/>
        <end position="175"/>
    </location>
</feature>
<feature type="zinc finger region" description="C4-type" evidence="1">
    <location>
        <begin position="57"/>
        <end position="72"/>
    </location>
</feature>
<dbReference type="EMBL" id="AL591984">
    <property type="protein sequence ID" value="CAD00915.1"/>
    <property type="molecule type" value="Genomic_DNA"/>
</dbReference>
<dbReference type="PIR" id="AE1412">
    <property type="entry name" value="AE1412"/>
</dbReference>
<dbReference type="RefSeq" id="NP_466224.1">
    <property type="nucleotide sequence ID" value="NC_003210.1"/>
</dbReference>
<dbReference type="RefSeq" id="WP_003722062.1">
    <property type="nucleotide sequence ID" value="NZ_CP149495.1"/>
</dbReference>
<dbReference type="SMR" id="Q8Y3X7"/>
<dbReference type="STRING" id="169963.gene:17595419"/>
<dbReference type="PaxDb" id="169963-lmo2702"/>
<dbReference type="EnsemblBacteria" id="CAD00915">
    <property type="protein sequence ID" value="CAD00915"/>
    <property type="gene ID" value="CAD00915"/>
</dbReference>
<dbReference type="GeneID" id="93240591"/>
<dbReference type="GeneID" id="987118"/>
<dbReference type="KEGG" id="lmo:lmo2702"/>
<dbReference type="PATRIC" id="fig|169963.11.peg.2768"/>
<dbReference type="eggNOG" id="COG0353">
    <property type="taxonomic scope" value="Bacteria"/>
</dbReference>
<dbReference type="HOGENOM" id="CLU_060739_1_0_9"/>
<dbReference type="OrthoDB" id="9802672at2"/>
<dbReference type="PhylomeDB" id="Q8Y3X7"/>
<dbReference type="BioCyc" id="LMON169963:LMO2702-MONOMER"/>
<dbReference type="Proteomes" id="UP000000817">
    <property type="component" value="Chromosome"/>
</dbReference>
<dbReference type="GO" id="GO:0003677">
    <property type="term" value="F:DNA binding"/>
    <property type="evidence" value="ECO:0007669"/>
    <property type="project" value="UniProtKB-UniRule"/>
</dbReference>
<dbReference type="GO" id="GO:0008270">
    <property type="term" value="F:zinc ion binding"/>
    <property type="evidence" value="ECO:0007669"/>
    <property type="project" value="UniProtKB-KW"/>
</dbReference>
<dbReference type="GO" id="GO:0006302">
    <property type="term" value="P:double-strand break repair"/>
    <property type="evidence" value="ECO:0000318"/>
    <property type="project" value="GO_Central"/>
</dbReference>
<dbReference type="GO" id="GO:0000725">
    <property type="term" value="P:recombinational repair"/>
    <property type="evidence" value="ECO:0000318"/>
    <property type="project" value="GO_Central"/>
</dbReference>
<dbReference type="CDD" id="cd01025">
    <property type="entry name" value="TOPRIM_recR"/>
    <property type="match status" value="1"/>
</dbReference>
<dbReference type="Gene3D" id="3.30.60.80">
    <property type="match status" value="1"/>
</dbReference>
<dbReference type="Gene3D" id="3.40.1360.10">
    <property type="match status" value="1"/>
</dbReference>
<dbReference type="Gene3D" id="6.10.250.240">
    <property type="match status" value="1"/>
</dbReference>
<dbReference type="Gene3D" id="1.10.8.420">
    <property type="entry name" value="RecR Domain 1"/>
    <property type="match status" value="1"/>
</dbReference>
<dbReference type="HAMAP" id="MF_00017">
    <property type="entry name" value="RecR"/>
    <property type="match status" value="1"/>
</dbReference>
<dbReference type="InterPro" id="IPR000093">
    <property type="entry name" value="DNA_Rcmb_RecR"/>
</dbReference>
<dbReference type="InterPro" id="IPR023627">
    <property type="entry name" value="Rcmb_RecR"/>
</dbReference>
<dbReference type="InterPro" id="IPR015967">
    <property type="entry name" value="Rcmb_RecR_Znf"/>
</dbReference>
<dbReference type="InterPro" id="IPR006171">
    <property type="entry name" value="TOPRIM_dom"/>
</dbReference>
<dbReference type="InterPro" id="IPR034137">
    <property type="entry name" value="TOPRIM_RecR"/>
</dbReference>
<dbReference type="NCBIfam" id="TIGR00615">
    <property type="entry name" value="recR"/>
    <property type="match status" value="1"/>
</dbReference>
<dbReference type="PANTHER" id="PTHR30446">
    <property type="entry name" value="RECOMBINATION PROTEIN RECR"/>
    <property type="match status" value="1"/>
</dbReference>
<dbReference type="PANTHER" id="PTHR30446:SF0">
    <property type="entry name" value="RECOMBINATION PROTEIN RECR"/>
    <property type="match status" value="1"/>
</dbReference>
<dbReference type="Pfam" id="PF21175">
    <property type="entry name" value="RecR_C"/>
    <property type="match status" value="1"/>
</dbReference>
<dbReference type="Pfam" id="PF21176">
    <property type="entry name" value="RecR_HhH"/>
    <property type="match status" value="1"/>
</dbReference>
<dbReference type="Pfam" id="PF02132">
    <property type="entry name" value="RecR_ZnF"/>
    <property type="match status" value="1"/>
</dbReference>
<dbReference type="Pfam" id="PF13662">
    <property type="entry name" value="Toprim_4"/>
    <property type="match status" value="1"/>
</dbReference>
<dbReference type="SMART" id="SM00493">
    <property type="entry name" value="TOPRIM"/>
    <property type="match status" value="1"/>
</dbReference>
<dbReference type="SUPFAM" id="SSF111304">
    <property type="entry name" value="Recombination protein RecR"/>
    <property type="match status" value="1"/>
</dbReference>
<dbReference type="PROSITE" id="PS01300">
    <property type="entry name" value="RECR"/>
    <property type="match status" value="1"/>
</dbReference>
<dbReference type="PROSITE" id="PS50880">
    <property type="entry name" value="TOPRIM"/>
    <property type="match status" value="1"/>
</dbReference>
<reference key="1">
    <citation type="journal article" date="2001" name="Science">
        <title>Comparative genomics of Listeria species.</title>
        <authorList>
            <person name="Glaser P."/>
            <person name="Frangeul L."/>
            <person name="Buchrieser C."/>
            <person name="Rusniok C."/>
            <person name="Amend A."/>
            <person name="Baquero F."/>
            <person name="Berche P."/>
            <person name="Bloecker H."/>
            <person name="Brandt P."/>
            <person name="Chakraborty T."/>
            <person name="Charbit A."/>
            <person name="Chetouani F."/>
            <person name="Couve E."/>
            <person name="de Daruvar A."/>
            <person name="Dehoux P."/>
            <person name="Domann E."/>
            <person name="Dominguez-Bernal G."/>
            <person name="Duchaud E."/>
            <person name="Durant L."/>
            <person name="Dussurget O."/>
            <person name="Entian K.-D."/>
            <person name="Fsihi H."/>
            <person name="Garcia-del Portillo F."/>
            <person name="Garrido P."/>
            <person name="Gautier L."/>
            <person name="Goebel W."/>
            <person name="Gomez-Lopez N."/>
            <person name="Hain T."/>
            <person name="Hauf J."/>
            <person name="Jackson D."/>
            <person name="Jones L.-M."/>
            <person name="Kaerst U."/>
            <person name="Kreft J."/>
            <person name="Kuhn M."/>
            <person name="Kunst F."/>
            <person name="Kurapkat G."/>
            <person name="Madueno E."/>
            <person name="Maitournam A."/>
            <person name="Mata Vicente J."/>
            <person name="Ng E."/>
            <person name="Nedjari H."/>
            <person name="Nordsiek G."/>
            <person name="Novella S."/>
            <person name="de Pablos B."/>
            <person name="Perez-Diaz J.-C."/>
            <person name="Purcell R."/>
            <person name="Remmel B."/>
            <person name="Rose M."/>
            <person name="Schlueter T."/>
            <person name="Simoes N."/>
            <person name="Tierrez A."/>
            <person name="Vazquez-Boland J.-A."/>
            <person name="Voss H."/>
            <person name="Wehland J."/>
            <person name="Cossart P."/>
        </authorList>
    </citation>
    <scope>NUCLEOTIDE SEQUENCE [LARGE SCALE GENOMIC DNA]</scope>
    <source>
        <strain>ATCC BAA-679 / EGD-e</strain>
    </source>
</reference>
<evidence type="ECO:0000255" key="1">
    <source>
        <dbReference type="HAMAP-Rule" id="MF_00017"/>
    </source>
</evidence>
<accession>Q8Y3X7</accession>
<gene>
    <name evidence="1" type="primary">recR</name>
    <name type="ordered locus">lmo2702</name>
</gene>